<comment type="function">
    <text evidence="7">GPI-anchored chitinase involved in the degradation of chitin, a component of the cell walls of fungi and exoskeletal elements of some animals (including worms and arthropods). Required to reshape the cell wall at the sites where cell wall remodeling and/or cell wall maturation actively take place such as sites of conidia formation.</text>
</comment>
<comment type="catalytic activity">
    <reaction evidence="5 7">
        <text>Random endo-hydrolysis of N-acetyl-beta-D-glucosaminide (1-&gt;4)-beta-linkages in chitin and chitodextrins.</text>
        <dbReference type="EC" id="3.2.1.14"/>
    </reaction>
</comment>
<comment type="activity regulation">
    <text evidence="7">The cyclic peptide natural product argifin acts as a specific inhibitor.</text>
</comment>
<comment type="biophysicochemical properties">
    <kinetics>
        <KM evidence="7">300 uM for 4-methylumbelliferyl beta-D-N,N'-diacetylchitobiose</KM>
    </kinetics>
</comment>
<comment type="subcellular location">
    <subcellularLocation>
        <location evidence="1">Cell membrane</location>
        <topology evidence="1">Lipid-anchor</topology>
        <topology evidence="1">GPI-anchor</topology>
    </subcellularLocation>
    <subcellularLocation>
        <location evidence="5 6">Secreted</location>
        <location evidence="5 6">Cell wall</location>
    </subcellularLocation>
</comment>
<comment type="induction">
    <text evidence="5 6">Shows high levels of constitutive expression and repressed by caspofungin.</text>
</comment>
<comment type="PTM">
    <text>O-mannosylated by pmt4.</text>
</comment>
<comment type="similarity">
    <text evidence="8">Belongs to the glycosyl hydrolase 18 family. Chitinase class III subfamily.</text>
</comment>
<keyword id="KW-0002">3D-structure</keyword>
<keyword id="KW-0119">Carbohydrate metabolism</keyword>
<keyword id="KW-1003">Cell membrane</keyword>
<keyword id="KW-0134">Cell wall</keyword>
<keyword id="KW-0146">Chitin degradation</keyword>
<keyword id="KW-0147">Chitin-binding</keyword>
<keyword id="KW-0325">Glycoprotein</keyword>
<keyword id="KW-0326">Glycosidase</keyword>
<keyword id="KW-0336">GPI-anchor</keyword>
<keyword id="KW-0378">Hydrolase</keyword>
<keyword id="KW-0449">Lipoprotein</keyword>
<keyword id="KW-0472">Membrane</keyword>
<keyword id="KW-0624">Polysaccharide degradation</keyword>
<keyword id="KW-0964">Secreted</keyword>
<keyword id="KW-0732">Signal</keyword>
<gene>
    <name type="primary">chiA1</name>
    <name type="synonym">chi1</name>
</gene>
<name>CHIA1_ASPFM</name>
<evidence type="ECO:0000250" key="1"/>
<evidence type="ECO:0000255" key="2"/>
<evidence type="ECO:0000255" key="3">
    <source>
        <dbReference type="PROSITE-ProRule" id="PRU01258"/>
    </source>
</evidence>
<evidence type="ECO:0000256" key="4">
    <source>
        <dbReference type="SAM" id="MobiDB-lite"/>
    </source>
</evidence>
<evidence type="ECO:0000269" key="5">
    <source>
    </source>
</evidence>
<evidence type="ECO:0000269" key="6">
    <source>
    </source>
</evidence>
<evidence type="ECO:0000269" key="7">
    <source>
    </source>
</evidence>
<evidence type="ECO:0000305" key="8"/>
<evidence type="ECO:0007744" key="9">
    <source>
        <dbReference type="PDB" id="2XUC"/>
    </source>
</evidence>
<evidence type="ECO:0007744" key="10">
    <source>
        <dbReference type="PDB" id="2XVN"/>
    </source>
</evidence>
<evidence type="ECO:0007829" key="11">
    <source>
        <dbReference type="PDB" id="2XUC"/>
    </source>
</evidence>
<reference key="1">
    <citation type="journal article" date="2003" name="Microbiology">
        <title>Disruption of the gene encoding the ChiB1 chitinase of Aspergillus fumigatus and characterization of a recombinant gene product.</title>
        <authorList>
            <person name="Jaques A.K."/>
            <person name="Fukamizo T."/>
            <person name="Hall D."/>
            <person name="Barton R.C."/>
            <person name="Escott G.M."/>
            <person name="Parkinson T."/>
            <person name="Hitchcock C.A."/>
            <person name="Adams D.J."/>
        </authorList>
    </citation>
    <scope>NUCLEOTIDE SEQUENCE [GENOMIC DNA]</scope>
    <source>
        <strain>NIH 5233 / ATCC 13073</strain>
    </source>
</reference>
<reference key="2">
    <citation type="journal article" date="2005" name="Arch. Microbiol.">
        <title>Differential expression and extent of fungal/plant and fungal/bacterial chitinases of Aspergillus fumigatus.</title>
        <authorList>
            <person name="Taib M."/>
            <person name="Pinney J.W."/>
            <person name="Westhead D.R."/>
            <person name="McDowall K.J."/>
            <person name="Adams D.J."/>
        </authorList>
    </citation>
    <scope>INDUCTION</scope>
    <scope>SUBCELLULAR LOCATION</scope>
    <scope>CATALYTIC ACTIVITY</scope>
</reference>
<reference key="3">
    <citation type="journal article" date="2010" name="Mol. Microbiol.">
        <title>Members of protein O-mannosyltransferase family in Aspergillus fumigatus differentially affect growth, morphogenesis and viability.</title>
        <authorList>
            <person name="Mouyna I."/>
            <person name="Kniemeyer O."/>
            <person name="Jank T."/>
            <person name="Loussert C."/>
            <person name="Mellado E."/>
            <person name="Aimanianda V."/>
            <person name="Beauvais A."/>
            <person name="Wartenberg D."/>
            <person name="Sarfati J."/>
            <person name="Bayry J."/>
            <person name="Prevost M.C."/>
            <person name="Brakhage A.A."/>
            <person name="Strahl S."/>
            <person name="Huerre M."/>
            <person name="Latge J.P."/>
        </authorList>
    </citation>
    <scope>GLYCOSYLATION</scope>
</reference>
<reference key="4">
    <citation type="journal article" date="2011" name="Antimicrob. Agents Chemother.">
        <title>Profiling the Aspergillus fumigatus proteome in response to caspofungin.</title>
        <authorList>
            <person name="Cagas S.E."/>
            <person name="Jain M.R."/>
            <person name="Li H."/>
            <person name="Perlin D.S."/>
        </authorList>
    </citation>
    <scope>IDENTIFICATION BY MASS SPECTROMETRY</scope>
    <scope>SUBCELLULAR LOCATION</scope>
    <scope>INDUCTION</scope>
</reference>
<reference evidence="9 10" key="5">
    <citation type="journal article" date="2010" name="Chem. Biol.">
        <title>Natural product-guided discovery of a fungal chitinase inhibitor.</title>
        <authorList>
            <person name="Rush C.L."/>
            <person name="Schuttelkopf A.W."/>
            <person name="Hurtado-Guerrero R."/>
            <person name="Blair D.E."/>
            <person name="Ibrahim A.F."/>
            <person name="Desvergnes S."/>
            <person name="Eggleston I.M."/>
            <person name="van Aalten D.M."/>
        </authorList>
    </citation>
    <scope>X-RAY CRYSTALLOGRAPHY (2.30 ANGSTROMS) OF 29-337 IN COMPLEX WITH INHIBITOR</scope>
    <scope>FUNCTION</scope>
    <scope>CATALYTIC ACTIVITY</scope>
    <scope>BIOPHYSICOCHEMICAL PROPERTIES</scope>
    <scope>ACTIVITY REGULATION</scope>
</reference>
<proteinExistence type="evidence at protein level"/>
<dbReference type="EC" id="3.2.1.14"/>
<dbReference type="EMBL" id="AY217659">
    <property type="protein sequence ID" value="AAO61685.1"/>
    <property type="molecule type" value="Genomic_DNA"/>
</dbReference>
<dbReference type="PDB" id="2XUC">
    <property type="method" value="X-ray"/>
    <property type="resolution" value="2.30 A"/>
    <property type="chains" value="A/B/C=29-337"/>
</dbReference>
<dbReference type="PDB" id="2XVN">
    <property type="method" value="X-ray"/>
    <property type="resolution" value="2.35 A"/>
    <property type="chains" value="A/B/C=29-337"/>
</dbReference>
<dbReference type="PDBsum" id="2XUC"/>
<dbReference type="PDBsum" id="2XVN"/>
<dbReference type="SMR" id="Q873Y0"/>
<dbReference type="BindingDB" id="Q873Y0"/>
<dbReference type="ChEMBL" id="CHEMBL1293196"/>
<dbReference type="CAZy" id="GH18">
    <property type="family name" value="Glycoside Hydrolase Family 18"/>
</dbReference>
<dbReference type="GlyCosmos" id="Q873Y0">
    <property type="glycosylation" value="2 sites, No reported glycans"/>
</dbReference>
<dbReference type="SABIO-RK" id="Q873Y0"/>
<dbReference type="EvolutionaryTrace" id="Q873Y0"/>
<dbReference type="GO" id="GO:0005576">
    <property type="term" value="C:extracellular region"/>
    <property type="evidence" value="ECO:0007669"/>
    <property type="project" value="UniProtKB-KW"/>
</dbReference>
<dbReference type="GO" id="GO:0005886">
    <property type="term" value="C:plasma membrane"/>
    <property type="evidence" value="ECO:0007669"/>
    <property type="project" value="UniProtKB-SubCell"/>
</dbReference>
<dbReference type="GO" id="GO:0098552">
    <property type="term" value="C:side of membrane"/>
    <property type="evidence" value="ECO:0007669"/>
    <property type="project" value="UniProtKB-KW"/>
</dbReference>
<dbReference type="GO" id="GO:0008061">
    <property type="term" value="F:chitin binding"/>
    <property type="evidence" value="ECO:0007669"/>
    <property type="project" value="UniProtKB-KW"/>
</dbReference>
<dbReference type="GO" id="GO:0008843">
    <property type="term" value="F:endochitinase activity"/>
    <property type="evidence" value="ECO:0007669"/>
    <property type="project" value="UniProtKB-EC"/>
</dbReference>
<dbReference type="GO" id="GO:0006032">
    <property type="term" value="P:chitin catabolic process"/>
    <property type="evidence" value="ECO:0007669"/>
    <property type="project" value="UniProtKB-KW"/>
</dbReference>
<dbReference type="GO" id="GO:0000272">
    <property type="term" value="P:polysaccharide catabolic process"/>
    <property type="evidence" value="ECO:0007669"/>
    <property type="project" value="UniProtKB-KW"/>
</dbReference>
<dbReference type="CDD" id="cd02877">
    <property type="entry name" value="GH18_hevamine_XipI_class_III"/>
    <property type="match status" value="1"/>
</dbReference>
<dbReference type="FunFam" id="3.20.20.80:FF:000150">
    <property type="entry name" value="Class III chitinase ChiA1"/>
    <property type="match status" value="1"/>
</dbReference>
<dbReference type="Gene3D" id="3.20.20.80">
    <property type="entry name" value="Glycosidases"/>
    <property type="match status" value="1"/>
</dbReference>
<dbReference type="InterPro" id="IPR045321">
    <property type="entry name" value="Cts1-like"/>
</dbReference>
<dbReference type="InterPro" id="IPR001223">
    <property type="entry name" value="Glyco_hydro18_cat"/>
</dbReference>
<dbReference type="InterPro" id="IPR001579">
    <property type="entry name" value="Glyco_hydro_18_chit_AS"/>
</dbReference>
<dbReference type="InterPro" id="IPR017853">
    <property type="entry name" value="Glycoside_hydrolase_SF"/>
</dbReference>
<dbReference type="InterPro" id="IPR050542">
    <property type="entry name" value="Glycosyl_Hydrlase18_Chitinase"/>
</dbReference>
<dbReference type="PANTHER" id="PTHR45708">
    <property type="entry name" value="ENDOCHITINASE"/>
    <property type="match status" value="1"/>
</dbReference>
<dbReference type="PANTHER" id="PTHR45708:SF47">
    <property type="entry name" value="ENDOCHITINASE A"/>
    <property type="match status" value="1"/>
</dbReference>
<dbReference type="Pfam" id="PF00704">
    <property type="entry name" value="Glyco_hydro_18"/>
    <property type="match status" value="1"/>
</dbReference>
<dbReference type="SUPFAM" id="SSF51445">
    <property type="entry name" value="(Trans)glycosidases"/>
    <property type="match status" value="1"/>
</dbReference>
<dbReference type="PROSITE" id="PS01095">
    <property type="entry name" value="GH18_1"/>
    <property type="match status" value="1"/>
</dbReference>
<dbReference type="PROSITE" id="PS51910">
    <property type="entry name" value="GH18_2"/>
    <property type="match status" value="1"/>
</dbReference>
<feature type="signal peptide" evidence="2">
    <location>
        <begin position="1"/>
        <end position="22"/>
    </location>
</feature>
<feature type="chain" id="PRO_0000429814" description="Endochitinase A1">
    <location>
        <begin position="23"/>
        <end position="800"/>
    </location>
</feature>
<feature type="propeptide" id="PRO_0000429815" description="Removed in mature form" evidence="2">
    <location>
        <begin position="801"/>
        <end position="825"/>
    </location>
</feature>
<feature type="domain" description="GH18" evidence="3">
    <location>
        <begin position="29"/>
        <end position="338"/>
    </location>
</feature>
<feature type="region of interest" description="Disordered" evidence="4">
    <location>
        <begin position="338"/>
        <end position="568"/>
    </location>
</feature>
<feature type="region of interest" description="Disordered" evidence="4">
    <location>
        <begin position="680"/>
        <end position="736"/>
    </location>
</feature>
<feature type="region of interest" description="Disordered" evidence="4">
    <location>
        <begin position="750"/>
        <end position="792"/>
    </location>
</feature>
<feature type="compositionally biased region" description="Low complexity" evidence="4">
    <location>
        <begin position="344"/>
        <end position="554"/>
    </location>
</feature>
<feature type="compositionally biased region" description="Polar residues" evidence="4">
    <location>
        <begin position="701"/>
        <end position="712"/>
    </location>
</feature>
<feature type="compositionally biased region" description="Polar residues" evidence="4">
    <location>
        <begin position="772"/>
        <end position="792"/>
    </location>
</feature>
<feature type="active site" description="Proton donor" evidence="3">
    <location>
        <position position="174"/>
    </location>
</feature>
<feature type="lipid moiety-binding region" description="GPI-anchor amidated glycine" evidence="2">
    <location>
        <position position="800"/>
    </location>
</feature>
<feature type="glycosylation site" description="N-linked (GlcNAc...) asparagine" evidence="2">
    <location>
        <position position="559"/>
    </location>
</feature>
<feature type="glycosylation site" description="N-linked (GlcNAc...) asparagine" evidence="2">
    <location>
        <position position="717"/>
    </location>
</feature>
<feature type="strand" evidence="11">
    <location>
        <begin position="30"/>
        <end position="36"/>
    </location>
</feature>
<feature type="helix" evidence="11">
    <location>
        <begin position="44"/>
        <end position="48"/>
    </location>
</feature>
<feature type="strand" evidence="11">
    <location>
        <begin position="55"/>
        <end position="61"/>
    </location>
</feature>
<feature type="helix" evidence="11">
    <location>
        <begin position="65"/>
        <end position="67"/>
    </location>
</feature>
<feature type="helix" evidence="11">
    <location>
        <begin position="69"/>
        <end position="71"/>
    </location>
</feature>
<feature type="helix" evidence="11">
    <location>
        <begin position="78"/>
        <end position="80"/>
    </location>
</feature>
<feature type="strand" evidence="11">
    <location>
        <begin position="85"/>
        <end position="87"/>
    </location>
</feature>
<feature type="strand" evidence="11">
    <location>
        <begin position="93"/>
        <end position="97"/>
    </location>
</feature>
<feature type="helix" evidence="11">
    <location>
        <begin position="101"/>
        <end position="112"/>
    </location>
</feature>
<feature type="strand" evidence="11">
    <location>
        <begin position="116"/>
        <end position="127"/>
    </location>
</feature>
<feature type="helix" evidence="11">
    <location>
        <begin position="134"/>
        <end position="148"/>
    </location>
</feature>
<feature type="turn" evidence="11">
    <location>
        <begin position="160"/>
        <end position="163"/>
    </location>
</feature>
<feature type="strand" evidence="11">
    <location>
        <begin position="167"/>
        <end position="173"/>
    </location>
</feature>
<feature type="helix" evidence="11">
    <location>
        <begin position="181"/>
        <end position="193"/>
    </location>
</feature>
<feature type="strand" evidence="11">
    <location>
        <begin position="201"/>
        <end position="204"/>
    </location>
</feature>
<feature type="strand" evidence="11">
    <location>
        <begin position="207"/>
        <end position="211"/>
    </location>
</feature>
<feature type="turn" evidence="11">
    <location>
        <begin position="213"/>
        <end position="215"/>
    </location>
</feature>
<feature type="helix" evidence="11">
    <location>
        <begin position="216"/>
        <end position="221"/>
    </location>
</feature>
<feature type="strand" evidence="11">
    <location>
        <begin position="225"/>
        <end position="230"/>
    </location>
</feature>
<feature type="helix" evidence="11">
    <location>
        <begin position="235"/>
        <end position="237"/>
    </location>
</feature>
<feature type="helix" evidence="11">
    <location>
        <begin position="240"/>
        <end position="242"/>
    </location>
</feature>
<feature type="helix" evidence="11">
    <location>
        <begin position="252"/>
        <end position="260"/>
    </location>
</feature>
<feature type="turn" evidence="11">
    <location>
        <begin position="263"/>
        <end position="266"/>
    </location>
</feature>
<feature type="strand" evidence="11">
    <location>
        <begin position="268"/>
        <end position="276"/>
    </location>
</feature>
<feature type="helix" evidence="11">
    <location>
        <begin position="277"/>
        <end position="279"/>
    </location>
</feature>
<feature type="helix" evidence="11">
    <location>
        <begin position="288"/>
        <end position="301"/>
    </location>
</feature>
<feature type="turn" evidence="11">
    <location>
        <begin position="303"/>
        <end position="305"/>
    </location>
</feature>
<feature type="strand" evidence="11">
    <location>
        <begin position="306"/>
        <end position="312"/>
    </location>
</feature>
<feature type="helix" evidence="11">
    <location>
        <begin position="314"/>
        <end position="319"/>
    </location>
</feature>
<feature type="helix" evidence="11">
    <location>
        <begin position="327"/>
        <end position="336"/>
    </location>
</feature>
<accession>Q873Y0</accession>
<protein>
    <recommendedName>
        <fullName>Endochitinase A1</fullName>
        <ecNumber>3.2.1.14</ecNumber>
    </recommendedName>
    <alternativeName>
        <fullName>Chitinase A1</fullName>
    </alternativeName>
</protein>
<organism>
    <name type="scientific">Aspergillus fumigatus</name>
    <name type="common">Neosartorya fumigata</name>
    <dbReference type="NCBI Taxonomy" id="746128"/>
    <lineage>
        <taxon>Eukaryota</taxon>
        <taxon>Fungi</taxon>
        <taxon>Dikarya</taxon>
        <taxon>Ascomycota</taxon>
        <taxon>Pezizomycotina</taxon>
        <taxon>Eurotiomycetes</taxon>
        <taxon>Eurotiomycetidae</taxon>
        <taxon>Eurotiales</taxon>
        <taxon>Aspergillaceae</taxon>
        <taxon>Aspergillus</taxon>
        <taxon>Aspergillus subgen. Fumigati</taxon>
    </lineage>
</organism>
<sequence length="825" mass="83088">MVSSKLSFVATAVAALAPLASAFDASSRSNLAIYWGQGPNQLRLSHFCQETSLDIINIGFINYFPDMSPGHWPGSNFGNQCDGSVYVTNDGVVTKLLSGCHQIMEDIPICQAAGKKVLLSIGGAYPPDQSILSEDSAVAFATFLWGAFGPVAEGWEGPRPFGDVVVDGFDFDIEHNGGFGYATMVNTFRQYFNQVPERKFYLSAAPQCIIPDAQLSDAIFNAAFDFIWIQYYNTAACSAKSFIDTSLGTFNFDAWVTVLKASASKDAKLYVGLPASETAANQGYYLTPDEVESLVSTYMDRYPDTFGGIMLWEATASENNQIDGAPYADHMKDILLHCDPSPPVTSSSAVPSSTPVTTPSPSSSAVPSSTPAVSETPSPSSSAVPSSTPVASSTPVVPGTSASSSPVSSSSAIAPSTPVVPGTSTPSSTPVASSTPVVPGTSASSSPVSSSSAVASSTPVVPGTSVPSSTPAIPGGSSSSSEAVASSTPLVTLTLTVSPTPAPSSSESSSTDLSSSTQTDVGTAPSQPAGPSTTATATTSSSSSSTDESSTTVGSGNGNGSGSTTTTAATDSITAAPTATSSATATGATSEPVTITTIIVTSYIDICPTGFTTVTTTYTTTYCPGTNTATATATVTNPPSGPGGAGSQTTAPTVPEGWTTTVTVCTQCAAKPTTVTLTLPVTETGSTSTDAVPAPPAATGEGSNPTQPSGASPTGGNGSFSEEPVPPPAVTQVSTSTEIVTLVRPTSSRPLILGTGTVHPSSTLAVKPSAKPSGQNSGSSSHVPIPPSYTQEAVSPLSTGAASRVTGLGHGLVLTVLTLSAFFVL</sequence>